<sequence>MASRPGFLTDWPWTPLGSFKYLLLAPLVFDSIYSYATIRDHEKLLIVAVTVWRIVHSQIWISLSRYQTAKGTKRILNKSIEFDQVDRERTWDDQIIFNTLIVYLTKVYVSGTSTIPFWRTDGVILVALLHAGPVEFIYYWFHRALHHHFLYSRYHSHHHSSIVTEPITSVVHPFAEHIGYTLILGLPLITTFMCGTVSVVSIALYLTYIDFMNNMGHCNFELIPKFLFSLLPPLKFLCYTPSFHSLHHTQFRTNYSLFMPMYDYIYGTTDECSDSLYETSLEKEEEKPDAIHLTHLTSLDSIYHLRLGFASLSSHPLSSRCYLFLMKPFALILSFILRSFSFQTFVVERNRFRDLTLHSHLLPKFSSHYMSHQQKECINKMIEAAILEADKKGVKVMSLGLLNQGEELNGYGEMYVRRHPKLKIRIVDGGSLAAEVVLHSIPVGTKEVLFRGQITKVARAIVFSLCQNAIKVMVLRKEEHSMLAEFLDDKCKENLIWLVGDGLSTKEQKMAKDGTLFLPFSQFPPKTLRKDCFYHTTPAMIIPHSAQNIDSCENWLGRRVMSAWRVGGIVHALEGWKEHECGLDDNSIINPPRVWEAALRNGFQPLLLPSLET</sequence>
<dbReference type="EMBL" id="AC004684">
    <property type="protein sequence ID" value="AAC23640.1"/>
    <property type="status" value="ALT_SEQ"/>
    <property type="molecule type" value="Genomic_DNA"/>
</dbReference>
<dbReference type="EMBL" id="CP002685">
    <property type="protein sequence ID" value="AEC09436.1"/>
    <property type="molecule type" value="Genomic_DNA"/>
</dbReference>
<dbReference type="EMBL" id="CP002685">
    <property type="protein sequence ID" value="AEC09437.1"/>
    <property type="molecule type" value="Genomic_DNA"/>
</dbReference>
<dbReference type="PIR" id="T02536">
    <property type="entry name" value="T02536"/>
</dbReference>
<dbReference type="RefSeq" id="NP_001118464.1">
    <molecule id="F4IR05-2"/>
    <property type="nucleotide sequence ID" value="NM_001124992.2"/>
</dbReference>
<dbReference type="RefSeq" id="NP_181306.3">
    <molecule id="F4IR05-1"/>
    <property type="nucleotide sequence ID" value="NM_129326.3"/>
</dbReference>
<dbReference type="STRING" id="3702.F4IR05"/>
<dbReference type="PaxDb" id="3702-AT2G37700.1"/>
<dbReference type="ProteomicsDB" id="224482">
    <molecule id="F4IR05-1"/>
</dbReference>
<dbReference type="EnsemblPlants" id="AT2G37700.1">
    <molecule id="F4IR05-1"/>
    <property type="protein sequence ID" value="AT2G37700.1"/>
    <property type="gene ID" value="AT2G37700"/>
</dbReference>
<dbReference type="EnsemblPlants" id="AT2G37700.2">
    <molecule id="F4IR05-2"/>
    <property type="protein sequence ID" value="AT2G37700.2"/>
    <property type="gene ID" value="AT2G37700"/>
</dbReference>
<dbReference type="GeneID" id="818347"/>
<dbReference type="Gramene" id="AT2G37700.1">
    <molecule id="F4IR05-1"/>
    <property type="protein sequence ID" value="AT2G37700.1"/>
    <property type="gene ID" value="AT2G37700"/>
</dbReference>
<dbReference type="Gramene" id="AT2G37700.2">
    <molecule id="F4IR05-2"/>
    <property type="protein sequence ID" value="AT2G37700.2"/>
    <property type="gene ID" value="AT2G37700"/>
</dbReference>
<dbReference type="KEGG" id="ath:AT2G37700"/>
<dbReference type="Araport" id="AT2G37700"/>
<dbReference type="TAIR" id="AT2G37700"/>
<dbReference type="eggNOG" id="ENOG502QR3T">
    <property type="taxonomic scope" value="Eukaryota"/>
</dbReference>
<dbReference type="HOGENOM" id="CLU_017842_1_0_1"/>
<dbReference type="InParanoid" id="F4IR05"/>
<dbReference type="OrthoDB" id="408954at2759"/>
<dbReference type="PRO" id="PR:F4IR05"/>
<dbReference type="Proteomes" id="UP000006548">
    <property type="component" value="Chromosome 2"/>
</dbReference>
<dbReference type="ExpressionAtlas" id="F4IR05">
    <property type="expression patterns" value="baseline and differential"/>
</dbReference>
<dbReference type="GO" id="GO:0016020">
    <property type="term" value="C:membrane"/>
    <property type="evidence" value="ECO:0007669"/>
    <property type="project" value="UniProtKB-SubCell"/>
</dbReference>
<dbReference type="GO" id="GO:0005506">
    <property type="term" value="F:iron ion binding"/>
    <property type="evidence" value="ECO:0007669"/>
    <property type="project" value="InterPro"/>
</dbReference>
<dbReference type="GO" id="GO:0016491">
    <property type="term" value="F:oxidoreductase activity"/>
    <property type="evidence" value="ECO:0007669"/>
    <property type="project" value="InterPro"/>
</dbReference>
<dbReference type="GO" id="GO:0008610">
    <property type="term" value="P:lipid biosynthetic process"/>
    <property type="evidence" value="ECO:0007669"/>
    <property type="project" value="InterPro"/>
</dbReference>
<dbReference type="InterPro" id="IPR021940">
    <property type="entry name" value="CER1-like_C"/>
</dbReference>
<dbReference type="InterPro" id="IPR006694">
    <property type="entry name" value="Fatty_acid_hydroxylase"/>
</dbReference>
<dbReference type="InterPro" id="IPR050307">
    <property type="entry name" value="Sterol_Desaturase_Related"/>
</dbReference>
<dbReference type="PANTHER" id="PTHR11863">
    <property type="entry name" value="STEROL DESATURASE"/>
    <property type="match status" value="1"/>
</dbReference>
<dbReference type="Pfam" id="PF12076">
    <property type="entry name" value="CER1-like_C"/>
    <property type="match status" value="1"/>
</dbReference>
<dbReference type="Pfam" id="PF04116">
    <property type="entry name" value="FA_hydroxylase"/>
    <property type="match status" value="1"/>
</dbReference>
<accession>F4IR05</accession>
<accession>B3H5B0</accession>
<accession>O80938</accession>
<proteinExistence type="evidence at transcript level"/>
<comment type="subcellular location">
    <subcellularLocation>
        <location evidence="3">Membrane</location>
        <topology evidence="3">Multi-pass membrane protein</topology>
    </subcellularLocation>
</comment>
<comment type="alternative products">
    <event type="alternative splicing"/>
    <isoform>
        <id>F4IR05-1</id>
        <name>1</name>
        <sequence type="displayed"/>
    </isoform>
    <isoform>
        <id>F4IR05-2</id>
        <name>2</name>
        <sequence type="described" ref="VSP_044266 VSP_044267"/>
    </isoform>
</comment>
<comment type="tissue specificity">
    <text evidence="2">Not detected in any tissues.</text>
</comment>
<comment type="similarity">
    <text evidence="3">Belongs to the sterol desaturase family.</text>
</comment>
<comment type="sequence caution" evidence="3">
    <conflict type="erroneous gene model prediction">
        <sequence resource="EMBL-CDS" id="AAC23640"/>
    </conflict>
</comment>
<name>CERL2_ARATH</name>
<organism>
    <name type="scientific">Arabidopsis thaliana</name>
    <name type="common">Mouse-ear cress</name>
    <dbReference type="NCBI Taxonomy" id="3702"/>
    <lineage>
        <taxon>Eukaryota</taxon>
        <taxon>Viridiplantae</taxon>
        <taxon>Streptophyta</taxon>
        <taxon>Embryophyta</taxon>
        <taxon>Tracheophyta</taxon>
        <taxon>Spermatophyta</taxon>
        <taxon>Magnoliopsida</taxon>
        <taxon>eudicotyledons</taxon>
        <taxon>Gunneridae</taxon>
        <taxon>Pentapetalae</taxon>
        <taxon>rosids</taxon>
        <taxon>malvids</taxon>
        <taxon>Brassicales</taxon>
        <taxon>Brassicaceae</taxon>
        <taxon>Camelineae</taxon>
        <taxon>Arabidopsis</taxon>
    </lineage>
</organism>
<reference key="1">
    <citation type="journal article" date="1999" name="Nature">
        <title>Sequence and analysis of chromosome 2 of the plant Arabidopsis thaliana.</title>
        <authorList>
            <person name="Lin X."/>
            <person name="Kaul S."/>
            <person name="Rounsley S.D."/>
            <person name="Shea T.P."/>
            <person name="Benito M.-I."/>
            <person name="Town C.D."/>
            <person name="Fujii C.Y."/>
            <person name="Mason T.M."/>
            <person name="Bowman C.L."/>
            <person name="Barnstead M.E."/>
            <person name="Feldblyum T.V."/>
            <person name="Buell C.R."/>
            <person name="Ketchum K.A."/>
            <person name="Lee J.J."/>
            <person name="Ronning C.M."/>
            <person name="Koo H.L."/>
            <person name="Moffat K.S."/>
            <person name="Cronin L.A."/>
            <person name="Shen M."/>
            <person name="Pai G."/>
            <person name="Van Aken S."/>
            <person name="Umayam L."/>
            <person name="Tallon L.J."/>
            <person name="Gill J.E."/>
            <person name="Adams M.D."/>
            <person name="Carrera A.J."/>
            <person name="Creasy T.H."/>
            <person name="Goodman H.M."/>
            <person name="Somerville C.R."/>
            <person name="Copenhaver G.P."/>
            <person name="Preuss D."/>
            <person name="Nierman W.C."/>
            <person name="White O."/>
            <person name="Eisen J.A."/>
            <person name="Salzberg S.L."/>
            <person name="Fraser C.M."/>
            <person name="Venter J.C."/>
        </authorList>
    </citation>
    <scope>NUCLEOTIDE SEQUENCE [LARGE SCALE GENOMIC DNA] (ISOFORM 2)</scope>
    <source>
        <strain>cv. Columbia</strain>
    </source>
</reference>
<reference key="2">
    <citation type="journal article" date="2017" name="Plant J.">
        <title>Araport11: a complete reannotation of the Arabidopsis thaliana reference genome.</title>
        <authorList>
            <person name="Cheng C.Y."/>
            <person name="Krishnakumar V."/>
            <person name="Chan A.P."/>
            <person name="Thibaud-Nissen F."/>
            <person name="Schobel S."/>
            <person name="Town C.D."/>
        </authorList>
    </citation>
    <scope>GENOME REANNOTATION</scope>
    <source>
        <strain>cv. Columbia</strain>
    </source>
</reference>
<reference key="3">
    <citation type="journal article" date="2011" name="Plant Physiol.">
        <title>Overexpression of Arabidopsis ECERIFERUM1 promotes wax very-long-chain alkane biosynthesis and influences plant response to biotic and abiotic stresses.</title>
        <authorList>
            <person name="Bourdenx B."/>
            <person name="Bernard A."/>
            <person name="Domergue F."/>
            <person name="Pascal S."/>
            <person name="Leger A."/>
            <person name="Roby D."/>
            <person name="Pervent M."/>
            <person name="Vile D."/>
            <person name="Haslam R.P."/>
            <person name="Napier J.A."/>
            <person name="Lessire R."/>
            <person name="Joubes J."/>
        </authorList>
    </citation>
    <scope>IDENTIFICATION</scope>
    <scope>TISSUE SPECIFICITY</scope>
</reference>
<feature type="chain" id="PRO_0000419616" description="Protein CER1-like 2">
    <location>
        <begin position="1"/>
        <end position="613"/>
    </location>
</feature>
<feature type="transmembrane region" description="Helical" evidence="1">
    <location>
        <begin position="13"/>
        <end position="33"/>
    </location>
</feature>
<feature type="transmembrane region" description="Helical" evidence="1">
    <location>
        <begin position="44"/>
        <end position="64"/>
    </location>
</feature>
<feature type="transmembrane region" description="Helical" evidence="1">
    <location>
        <begin position="95"/>
        <end position="115"/>
    </location>
</feature>
<feature type="transmembrane region" description="Helical" evidence="1">
    <location>
        <begin position="122"/>
        <end position="142"/>
    </location>
</feature>
<feature type="transmembrane region" description="Helical" evidence="1">
    <location>
        <begin position="182"/>
        <end position="202"/>
    </location>
</feature>
<feature type="transmembrane region" description="Helical" evidence="1">
    <location>
        <begin position="322"/>
        <end position="342"/>
    </location>
</feature>
<feature type="domain" description="Fatty acid hydroxylase" evidence="1">
    <location>
        <begin position="134"/>
        <end position="268"/>
    </location>
</feature>
<feature type="splice variant" id="VSP_044266" description="In isoform 2." evidence="3">
    <original>MVLRKEEHSMLAEFLDDKCKE</original>
    <variation>PSFSTNGESETKGFNLDGPFL</variation>
    <location>
        <begin position="473"/>
        <end position="493"/>
    </location>
</feature>
<feature type="splice variant" id="VSP_044267" description="In isoform 2." evidence="3">
    <location>
        <begin position="494"/>
        <end position="613"/>
    </location>
</feature>
<keyword id="KW-0025">Alternative splicing</keyword>
<keyword id="KW-0472">Membrane</keyword>
<keyword id="KW-1185">Reference proteome</keyword>
<keyword id="KW-0812">Transmembrane</keyword>
<keyword id="KW-1133">Transmembrane helix</keyword>
<evidence type="ECO:0000255" key="1"/>
<evidence type="ECO:0000269" key="2">
    <source>
    </source>
</evidence>
<evidence type="ECO:0000305" key="3"/>
<protein>
    <recommendedName>
        <fullName>Protein CER1-like 2</fullName>
    </recommendedName>
</protein>
<gene>
    <name type="ordered locus">At2g37700</name>
    <name type="ORF">F13M22.20</name>
</gene>